<dbReference type="EMBL" id="AJ251857">
    <property type="protein sequence ID" value="CAC27560.1"/>
    <property type="molecule type" value="mRNA"/>
</dbReference>
<dbReference type="EMBL" id="AJ301616">
    <property type="protein sequence ID" value="CAC37793.1"/>
    <property type="molecule type" value="Genomic_DNA"/>
</dbReference>
<dbReference type="EMBL" id="AF182404">
    <property type="protein sequence ID" value="AAG16903.1"/>
    <property type="molecule type" value="mRNA"/>
</dbReference>
<dbReference type="EMBL" id="AY346372">
    <property type="protein sequence ID" value="AAQ54327.1"/>
    <property type="molecule type" value="mRNA"/>
</dbReference>
<dbReference type="EMBL" id="AC022211">
    <property type="status" value="NOT_ANNOTATED_CDS"/>
    <property type="molecule type" value="Genomic_DNA"/>
</dbReference>
<dbReference type="EMBL" id="BC001075">
    <property type="protein sequence ID" value="AAH01075.1"/>
    <property type="molecule type" value="mRNA"/>
</dbReference>
<dbReference type="EMBL" id="BC005120">
    <property type="protein sequence ID" value="AAH05120.1"/>
    <property type="molecule type" value="mRNA"/>
</dbReference>
<dbReference type="CCDS" id="CCDS11720.1">
    <molecule id="Q9HC21-1"/>
</dbReference>
<dbReference type="RefSeq" id="NP_001119593.1">
    <molecule id="Q9HC21-1"/>
    <property type="nucleotide sequence ID" value="NM_001126121.2"/>
</dbReference>
<dbReference type="RefSeq" id="NP_001119594.1">
    <molecule id="Q9HC21-1"/>
    <property type="nucleotide sequence ID" value="NM_001126122.2"/>
</dbReference>
<dbReference type="RefSeq" id="NP_068380.3">
    <molecule id="Q9HC21-1"/>
    <property type="nucleotide sequence ID" value="NM_021734.4"/>
</dbReference>
<dbReference type="RefSeq" id="XP_005257616.1">
    <molecule id="Q9HC21-1"/>
    <property type="nucleotide sequence ID" value="XM_005257559.5"/>
</dbReference>
<dbReference type="RefSeq" id="XP_005257617.1">
    <molecule id="Q9HC21-1"/>
    <property type="nucleotide sequence ID" value="XM_005257560.3"/>
</dbReference>
<dbReference type="RefSeq" id="XP_005257618.1">
    <molecule id="Q9HC21-1"/>
    <property type="nucleotide sequence ID" value="XM_005257561.5"/>
</dbReference>
<dbReference type="RefSeq" id="XP_005257619.1">
    <molecule id="Q9HC21-1"/>
    <property type="nucleotide sequence ID" value="XM_005257562.3"/>
</dbReference>
<dbReference type="RefSeq" id="XP_006722070.1">
    <molecule id="Q9HC21-1"/>
    <property type="nucleotide sequence ID" value="XM_006722007.3"/>
</dbReference>
<dbReference type="RefSeq" id="XP_016880415.1">
    <property type="nucleotide sequence ID" value="XM_017024926.1"/>
</dbReference>
<dbReference type="RefSeq" id="XP_047292468.1">
    <molecule id="Q9HC21-1"/>
    <property type="nucleotide sequence ID" value="XM_047436512.1"/>
</dbReference>
<dbReference type="RefSeq" id="XP_047292469.1">
    <molecule id="Q9HC21-1"/>
    <property type="nucleotide sequence ID" value="XM_047436513.1"/>
</dbReference>
<dbReference type="RefSeq" id="XP_054172830.1">
    <molecule id="Q9HC21-1"/>
    <property type="nucleotide sequence ID" value="XM_054316855.1"/>
</dbReference>
<dbReference type="RefSeq" id="XP_054172831.1">
    <molecule id="Q9HC21-1"/>
    <property type="nucleotide sequence ID" value="XM_054316856.1"/>
</dbReference>
<dbReference type="RefSeq" id="XP_054172832.1">
    <molecule id="Q9HC21-1"/>
    <property type="nucleotide sequence ID" value="XM_054316857.1"/>
</dbReference>
<dbReference type="RefSeq" id="XP_054172833.1">
    <molecule id="Q9HC21-1"/>
    <property type="nucleotide sequence ID" value="XM_054316858.1"/>
</dbReference>
<dbReference type="RefSeq" id="XP_054172834.1">
    <molecule id="Q9HC21-1"/>
    <property type="nucleotide sequence ID" value="XM_054316859.1"/>
</dbReference>
<dbReference type="RefSeq" id="XP_054172835.1">
    <molecule id="Q9HC21-1"/>
    <property type="nucleotide sequence ID" value="XM_054316860.1"/>
</dbReference>
<dbReference type="RefSeq" id="XP_054172836.1">
    <molecule id="Q9HC21-1"/>
    <property type="nucleotide sequence ID" value="XM_054316861.1"/>
</dbReference>
<dbReference type="SMR" id="Q9HC21"/>
<dbReference type="BioGRID" id="121903">
    <property type="interactions" value="124"/>
</dbReference>
<dbReference type="FunCoup" id="Q9HC21">
    <property type="interactions" value="1287"/>
</dbReference>
<dbReference type="IntAct" id="Q9HC21">
    <property type="interactions" value="65"/>
</dbReference>
<dbReference type="MINT" id="Q9HC21"/>
<dbReference type="STRING" id="9606.ENSP00000385312"/>
<dbReference type="TCDB" id="2.A.29.16.1">
    <property type="family name" value="the mitochondrial carrier (mc) family"/>
</dbReference>
<dbReference type="GlyGen" id="Q9HC21">
    <property type="glycosylation" value="2 sites, 1 N-linked glycan (1 site), 1 O-linked glycan (1 site)"/>
</dbReference>
<dbReference type="iPTMnet" id="Q9HC21"/>
<dbReference type="PhosphoSitePlus" id="Q9HC21"/>
<dbReference type="SwissPalm" id="Q9HC21"/>
<dbReference type="BioMuta" id="SLC25A19"/>
<dbReference type="DMDM" id="20137652"/>
<dbReference type="jPOST" id="Q9HC21"/>
<dbReference type="MassIVE" id="Q9HC21"/>
<dbReference type="PaxDb" id="9606-ENSP00000385312"/>
<dbReference type="PeptideAtlas" id="Q9HC21"/>
<dbReference type="ProteomicsDB" id="20044"/>
<dbReference type="ProteomicsDB" id="81625">
    <molecule id="Q9HC21-1"/>
</dbReference>
<dbReference type="Pumba" id="Q9HC21"/>
<dbReference type="Antibodypedia" id="46024">
    <property type="antibodies" value="95 antibodies from 19 providers"/>
</dbReference>
<dbReference type="DNASU" id="60386"/>
<dbReference type="Ensembl" id="ENST00000320362.7">
    <molecule id="Q9HC21-1"/>
    <property type="protein sequence ID" value="ENSP00000319574.3"/>
    <property type="gene ID" value="ENSG00000125454.12"/>
</dbReference>
<dbReference type="Ensembl" id="ENST00000375261.8">
    <molecule id="Q9HC21-2"/>
    <property type="protein sequence ID" value="ENSP00000364410.4"/>
    <property type="gene ID" value="ENSG00000125454.12"/>
</dbReference>
<dbReference type="Ensembl" id="ENST00000402418.7">
    <molecule id="Q9HC21-1"/>
    <property type="protein sequence ID" value="ENSP00000385312.3"/>
    <property type="gene ID" value="ENSG00000125454.12"/>
</dbReference>
<dbReference type="Ensembl" id="ENST00000416858.7">
    <molecule id="Q9HC21-1"/>
    <property type="protein sequence ID" value="ENSP00000397818.2"/>
    <property type="gene ID" value="ENSG00000125454.12"/>
</dbReference>
<dbReference type="Ensembl" id="ENST00000442286.6">
    <molecule id="Q9HC21-1"/>
    <property type="protein sequence ID" value="ENSP00000402202.2"/>
    <property type="gene ID" value="ENSG00000125454.12"/>
</dbReference>
<dbReference type="Ensembl" id="ENST00000580994.5">
    <molecule id="Q9HC21-1"/>
    <property type="protein sequence ID" value="ENSP00000463795.1"/>
    <property type="gene ID" value="ENSG00000125454.12"/>
</dbReference>
<dbReference type="GeneID" id="60386"/>
<dbReference type="KEGG" id="hsa:60386"/>
<dbReference type="MANE-Select" id="ENST00000416858.7">
    <property type="protein sequence ID" value="ENSP00000397818.2"/>
    <property type="RefSeq nucleotide sequence ID" value="NM_001126121.2"/>
    <property type="RefSeq protein sequence ID" value="NP_001119593.1"/>
</dbReference>
<dbReference type="UCSC" id="uc002jns.5">
    <molecule id="Q9HC21-1"/>
    <property type="organism name" value="human"/>
</dbReference>
<dbReference type="AGR" id="HGNC:14409"/>
<dbReference type="CTD" id="60386"/>
<dbReference type="DisGeNET" id="60386"/>
<dbReference type="GeneCards" id="SLC25A19"/>
<dbReference type="GeneReviews" id="SLC25A19"/>
<dbReference type="HGNC" id="HGNC:14409">
    <property type="gene designation" value="SLC25A19"/>
</dbReference>
<dbReference type="HPA" id="ENSG00000125454">
    <property type="expression patterns" value="Low tissue specificity"/>
</dbReference>
<dbReference type="MalaCards" id="SLC25A19"/>
<dbReference type="MIM" id="606521">
    <property type="type" value="gene"/>
</dbReference>
<dbReference type="MIM" id="607196">
    <property type="type" value="phenotype"/>
</dbReference>
<dbReference type="MIM" id="613710">
    <property type="type" value="phenotype"/>
</dbReference>
<dbReference type="neXtProt" id="NX_Q9HC21"/>
<dbReference type="OpenTargets" id="ENSG00000125454"/>
<dbReference type="Orphanet" id="99742">
    <property type="disease" value="Amish lethal microcephaly"/>
</dbReference>
<dbReference type="Orphanet" id="217396">
    <property type="disease" value="Progressive polyneuropathy with bilateral striatal necrosis"/>
</dbReference>
<dbReference type="PharmGKB" id="PA37879"/>
<dbReference type="VEuPathDB" id="HostDB:ENSG00000125454"/>
<dbReference type="eggNOG" id="KOG0752">
    <property type="taxonomic scope" value="Eukaryota"/>
</dbReference>
<dbReference type="GeneTree" id="ENSGT00550000074902"/>
<dbReference type="HOGENOM" id="CLU_015166_10_3_1"/>
<dbReference type="InParanoid" id="Q9HC21"/>
<dbReference type="OMA" id="MYVCYGA"/>
<dbReference type="OrthoDB" id="18574at2759"/>
<dbReference type="PAN-GO" id="Q9HC21">
    <property type="GO annotations" value="3 GO annotations based on evolutionary models"/>
</dbReference>
<dbReference type="PhylomeDB" id="Q9HC21"/>
<dbReference type="TreeFam" id="TF313047"/>
<dbReference type="PathwayCommons" id="Q9HC21"/>
<dbReference type="Reactome" id="R-HSA-196819">
    <property type="pathway name" value="Vitamin B1 (thiamin) metabolism"/>
</dbReference>
<dbReference type="SignaLink" id="Q9HC21"/>
<dbReference type="BioGRID-ORCS" id="60386">
    <property type="hits" value="128 hits in 1166 CRISPR screens"/>
</dbReference>
<dbReference type="GeneWiki" id="SLC25A19"/>
<dbReference type="GenomeRNAi" id="60386"/>
<dbReference type="Pharos" id="Q9HC21">
    <property type="development level" value="Tbio"/>
</dbReference>
<dbReference type="PRO" id="PR:Q9HC21"/>
<dbReference type="Proteomes" id="UP000005640">
    <property type="component" value="Chromosome 17"/>
</dbReference>
<dbReference type="RNAct" id="Q9HC21">
    <property type="molecule type" value="protein"/>
</dbReference>
<dbReference type="Bgee" id="ENSG00000125454">
    <property type="expression patterns" value="Expressed in left testis and 163 other cell types or tissues"/>
</dbReference>
<dbReference type="ExpressionAtlas" id="Q9HC21">
    <property type="expression patterns" value="baseline and differential"/>
</dbReference>
<dbReference type="GO" id="GO:0005743">
    <property type="term" value="C:mitochondrial inner membrane"/>
    <property type="evidence" value="ECO:0000318"/>
    <property type="project" value="GO_Central"/>
</dbReference>
<dbReference type="GO" id="GO:0005739">
    <property type="term" value="C:mitochondrion"/>
    <property type="evidence" value="ECO:0000314"/>
    <property type="project" value="HPA"/>
</dbReference>
<dbReference type="GO" id="GO:0005634">
    <property type="term" value="C:nucleus"/>
    <property type="evidence" value="ECO:0007005"/>
    <property type="project" value="UniProtKB"/>
</dbReference>
<dbReference type="GO" id="GO:0015297">
    <property type="term" value="F:antiporter activity"/>
    <property type="evidence" value="ECO:0007669"/>
    <property type="project" value="UniProtKB-KW"/>
</dbReference>
<dbReference type="GO" id="GO:0030233">
    <property type="term" value="F:deoxynucleotide transmembrane transporter activity"/>
    <property type="evidence" value="ECO:0000304"/>
    <property type="project" value="UniProtKB"/>
</dbReference>
<dbReference type="GO" id="GO:0090422">
    <property type="term" value="F:thiamine pyrophosphate transmembrane transporter activity"/>
    <property type="evidence" value="ECO:0000314"/>
    <property type="project" value="UniProtKB"/>
</dbReference>
<dbReference type="GO" id="GO:0015234">
    <property type="term" value="F:thiamine transmembrane transporter activity"/>
    <property type="evidence" value="ECO:0000318"/>
    <property type="project" value="GO_Central"/>
</dbReference>
<dbReference type="GO" id="GO:0030302">
    <property type="term" value="P:deoxynucleotide transport"/>
    <property type="evidence" value="ECO:0000303"/>
    <property type="project" value="UniProtKB"/>
</dbReference>
<dbReference type="GO" id="GO:0009229">
    <property type="term" value="P:thiamine diphosphate biosynthetic process"/>
    <property type="evidence" value="ECO:0007669"/>
    <property type="project" value="Ensembl"/>
</dbReference>
<dbReference type="GO" id="GO:0030974">
    <property type="term" value="P:thiamine pyrophosphate transmembrane transport"/>
    <property type="evidence" value="ECO:0000314"/>
    <property type="project" value="UniProtKB"/>
</dbReference>
<dbReference type="GO" id="GO:0042723">
    <property type="term" value="P:thiamine-containing compound metabolic process"/>
    <property type="evidence" value="ECO:0000304"/>
    <property type="project" value="Reactome"/>
</dbReference>
<dbReference type="FunFam" id="1.50.40.10:FF:000011">
    <property type="entry name" value="Mitochondrial thiamine pyrophosphate carrier 1"/>
    <property type="match status" value="1"/>
</dbReference>
<dbReference type="Gene3D" id="1.50.40.10">
    <property type="entry name" value="Mitochondrial carrier domain"/>
    <property type="match status" value="1"/>
</dbReference>
<dbReference type="InterPro" id="IPR002067">
    <property type="entry name" value="Mit_carrier"/>
</dbReference>
<dbReference type="InterPro" id="IPR018108">
    <property type="entry name" value="Mitochondrial_sb/sol_carrier"/>
</dbReference>
<dbReference type="InterPro" id="IPR023395">
    <property type="entry name" value="Mt_carrier_dom_sf"/>
</dbReference>
<dbReference type="PANTHER" id="PTHR24089">
    <property type="entry name" value="SOLUTE CARRIER FAMILY 25"/>
    <property type="match status" value="1"/>
</dbReference>
<dbReference type="Pfam" id="PF00153">
    <property type="entry name" value="Mito_carr"/>
    <property type="match status" value="3"/>
</dbReference>
<dbReference type="PRINTS" id="PR00926">
    <property type="entry name" value="MITOCARRIER"/>
</dbReference>
<dbReference type="SUPFAM" id="SSF103506">
    <property type="entry name" value="Mitochondrial carrier"/>
    <property type="match status" value="1"/>
</dbReference>
<dbReference type="PROSITE" id="PS50920">
    <property type="entry name" value="SOLCAR"/>
    <property type="match status" value="3"/>
</dbReference>
<feature type="chain" id="PRO_0000090611" description="Mitochondrial thiamine pyrophosphate carrier">
    <location>
        <begin position="1"/>
        <end position="320"/>
    </location>
</feature>
<feature type="transmembrane region" description="Helical; Name=1" evidence="2">
    <location>
        <begin position="19"/>
        <end position="39"/>
    </location>
</feature>
<feature type="transmembrane region" description="Helical; Name=2" evidence="2">
    <location>
        <begin position="87"/>
        <end position="107"/>
    </location>
</feature>
<feature type="transmembrane region" description="Helical; Name=3" evidence="2">
    <location>
        <begin position="122"/>
        <end position="142"/>
    </location>
</feature>
<feature type="transmembrane region" description="Helical; Name=4" evidence="2">
    <location>
        <begin position="173"/>
        <end position="193"/>
    </location>
</feature>
<feature type="transmembrane region" description="Helical; Name=5" evidence="2">
    <location>
        <begin position="220"/>
        <end position="240"/>
    </location>
</feature>
<feature type="transmembrane region" description="Helical; Name=6" evidence="2">
    <location>
        <begin position="293"/>
        <end position="313"/>
    </location>
</feature>
<feature type="repeat" description="Solcar 1" evidence="3">
    <location>
        <begin position="13"/>
        <end position="106"/>
    </location>
</feature>
<feature type="repeat" description="Solcar 2" evidence="3">
    <location>
        <begin position="116"/>
        <end position="202"/>
    </location>
</feature>
<feature type="repeat" description="Solcar 3" evidence="3">
    <location>
        <begin position="214"/>
        <end position="309"/>
    </location>
</feature>
<feature type="short sequence motif" description="Substrate recognition" evidence="1">
    <location>
        <begin position="241"/>
        <end position="246"/>
    </location>
</feature>
<feature type="modified residue" description="Phosphoserine" evidence="19">
    <location>
        <position position="51"/>
    </location>
</feature>
<feature type="splice variant" id="VSP_053908" description="In isoform 2." evidence="16">
    <location>
        <begin position="97"/>
        <end position="153"/>
    </location>
</feature>
<feature type="sequence variant" id="VAR_065125" description="In THMD4; affects function as shown by complementation studies in yeast; dbSNP:rs387906944." evidence="9">
    <original>G</original>
    <variation>S</variation>
    <location>
        <position position="125"/>
    </location>
</feature>
<feature type="sequence variant" id="VAR_014103" description="In MCPHA; diminishes thiamine pyrophosphate transmembrane transporter activity by 70%; dbSNP:rs119473030." evidence="5">
    <original>G</original>
    <variation>A</variation>
    <location>
        <position position="177"/>
    </location>
</feature>
<feature type="sequence variant" id="VAR_087311" description="In THMD4; reduced protein expression." evidence="11">
    <original>Q</original>
    <variation>H</variation>
    <location>
        <position position="192"/>
    </location>
</feature>
<feature type="mutagenesis site" description="Does not affect thiamine pyrophosphate transmembrane transporter activity." evidence="10">
    <original>T</original>
    <variation>A</variation>
    <location>
        <position position="29"/>
    </location>
</feature>
<feature type="mutagenesis site" description="Does not affect thiamine pyrophosphate transmembrane transporter activity." evidence="10">
    <original>R</original>
    <variation>A</variation>
    <location>
        <position position="30"/>
    </location>
</feature>
<feature type="mutagenesis site" description="Decreases thiamine pyrophosphate transmembrane transporter activity." evidence="10">
    <original>I</original>
    <variation>A</variation>
    <location>
        <position position="33"/>
    </location>
</feature>
<feature type="mutagenesis site" description="Decreases thiamine pyrophosphate transmembrane transporter activity." evidence="10">
    <original>S</original>
    <variation>A</variation>
    <location>
        <position position="34"/>
    </location>
</feature>
<feature type="mutagenesis site" description="Decreases thiamine pyrophosphate transmembrane transporter activity." evidence="10">
    <original>D</original>
    <variation>A</variation>
    <location>
        <position position="37"/>
    </location>
</feature>
<feature type="mutagenesis site" description="Does not affect thiamine pyrophosphate transmembrane transporter activity." evidence="10">
    <original>H</original>
    <variation>A</variation>
    <location>
        <position position="82"/>
    </location>
</feature>
<feature type="mutagenesis site" description="Decreases thiamine pyrophosphate transmembrane transporter activity. Does not affect protein expression." evidence="10">
    <original>H</original>
    <variation>A</variation>
    <location>
        <position position="137"/>
    </location>
</feature>
<feature type="mutagenesis site" description="Does not affect thiamine pyrophosphate transmembrane transporter activity." evidence="10">
    <original>K</original>
    <variation>A</variation>
    <location>
        <position position="231"/>
    </location>
</feature>
<feature type="mutagenesis site" description="Decreases thiamine pyrophosphate transmembrane transporter activity. Does not affect protein expression." evidence="10">
    <original>K</original>
    <variation>A</variation>
    <location>
        <position position="291"/>
    </location>
</feature>
<feature type="mutagenesis site" description="Does not affect thiamine pyrophosphate transmembrane transporter activity." evidence="10">
    <original>F</original>
    <variation>A</variation>
    <location>
        <position position="298"/>
    </location>
</feature>
<feature type="sequence conflict" description="In Ref. 3; AAQ54327." evidence="17" ref="3">
    <original>F</original>
    <variation>L</variation>
    <location>
        <position position="186"/>
    </location>
</feature>
<name>TPC_HUMAN</name>
<gene>
    <name evidence="18" type="primary">SLC25A19</name>
    <name evidence="13" type="synonym">DNC</name>
    <name evidence="15" type="synonym">MUP1</name>
</gene>
<comment type="function">
    <text evidence="7 8 10 12">Mitochondrial transporter mediating uptake of thiamine diphosphate into mitochondria. It is not clear if the antiporter activity is affected by the membrane potential or by the proton electrochemical gradient.</text>
</comment>
<comment type="catalytic activity">
    <reaction evidence="7 8 10 12">
        <text>thiamine phosphate(out) + thiamine diphosphate(in) = thiamine phosphate(in) + thiamine diphosphate(out)</text>
        <dbReference type="Rhea" id="RHEA:73383"/>
        <dbReference type="ChEBI" id="CHEBI:37575"/>
        <dbReference type="ChEBI" id="CHEBI:58937"/>
    </reaction>
</comment>
<comment type="subcellular location">
    <subcellularLocation>
        <location evidence="6 10 11">Mitochondrion membrane</location>
        <topology evidence="2">Multi-pass membrane protein</topology>
    </subcellularLocation>
</comment>
<comment type="alternative products">
    <event type="alternative splicing"/>
    <isoform>
        <id>Q9HC21-1</id>
        <name>1</name>
        <sequence type="displayed"/>
    </isoform>
    <isoform>
        <id>Q9HC21-2</id>
        <name>2</name>
        <sequence type="described" ref="VSP_053908"/>
    </isoform>
</comment>
<comment type="tissue specificity">
    <text evidence="4">Expressed in all tissues examined except for placenta. Highest levels in colon, kidney, lung, testis, spleen, and brain.</text>
</comment>
<comment type="disease" evidence="5 7">
    <disease id="DI-00750">
        <name>Microcephaly, Amish type</name>
        <acronym>MCPHA</acronym>
        <description>A disorder characterized by severe congenital microcephaly and severe 2-ketoglutaric aciduria leading to death within the first year.</description>
        <dbReference type="MIM" id="607196"/>
    </disease>
    <text>The disease is caused by variants affecting the gene represented in this entry.</text>
</comment>
<comment type="disease" evidence="9 11">
    <disease id="DI-03011">
        <name>Thiamine metabolism dysfunction syndrome 4, bilateral striatal degeneration and progressive polyneuropathy type</name>
        <acronym>THMD4</acronym>
        <description>A disease characterized by recurrent episodes of flaccid paralysis and encephalopathy associated with bilateral striatal necrosis and chronic progressive polyneuropathy.</description>
        <dbReference type="MIM" id="613710"/>
    </disease>
    <text>The disease is caused by variants affecting the gene represented in this entry.</text>
</comment>
<comment type="similarity">
    <text evidence="17">Belongs to the mitochondrial carrier (TC 2.A.29) family.</text>
</comment>
<comment type="caution">
    <text evidence="4 6 8">Previously identified as the mitochondrial deoxyribonucleotide carrier (PubMed:11226231). However other experiments later demonstrated that SLC25A19 is a thiamine diphosphate transporter and not a mitochondrial deoxyribonucleotide carrier (PubMed:15539640, PubMed:18280798).</text>
</comment>
<reference key="1">
    <citation type="journal article" date="2001" name="Proc. Natl. Acad. Sci. U.S.A.">
        <title>The human mitochondrial deoxynucleotide carrier and its role in the toxicity of nucleoside antivirals.</title>
        <authorList>
            <person name="Dolce V."/>
            <person name="Fiermonte G."/>
            <person name="Runswick M.J."/>
            <person name="Palmieri F."/>
            <person name="Walker J.E."/>
        </authorList>
    </citation>
    <scope>NUCLEOTIDE SEQUENCE [MRNA] (ISOFORM 1)</scope>
    <scope>CHARACTERIZATION</scope>
    <scope>TISSUE SPECIFICITY</scope>
    <source>
        <tissue>Liver</tissue>
    </source>
</reference>
<reference key="2">
    <citation type="submission" date="1999-09" db="EMBL/GenBank/DDBJ databases">
        <title>MUP 1, a mitochondrial uncoupling protein.</title>
        <authorList>
            <person name="Renard S."/>
            <person name="Mondesert G."/>
            <person name="Besnard F."/>
        </authorList>
    </citation>
    <scope>NUCLEOTIDE SEQUENCE [GENOMIC DNA]</scope>
</reference>
<reference key="3">
    <citation type="submission" date="2003-07" db="EMBL/GenBank/DDBJ databases">
        <authorList>
            <person name="Li H."/>
            <person name="Yu R."/>
            <person name="Zhou G."/>
            <person name="Ke R."/>
            <person name="Shen C."/>
            <person name="Lin L."/>
            <person name="Yang S."/>
        </authorList>
    </citation>
    <scope>NUCLEOTIDE SEQUENCE [MRNA] (ISOFORM 2)</scope>
</reference>
<reference key="4">
    <citation type="journal article" date="2006" name="Nature">
        <title>DNA sequence of human chromosome 17 and analysis of rearrangement in the human lineage.</title>
        <authorList>
            <person name="Zody M.C."/>
            <person name="Garber M."/>
            <person name="Adams D.J."/>
            <person name="Sharpe T."/>
            <person name="Harrow J."/>
            <person name="Lupski J.R."/>
            <person name="Nicholson C."/>
            <person name="Searle S.M."/>
            <person name="Wilming L."/>
            <person name="Young S.K."/>
            <person name="Abouelleil A."/>
            <person name="Allen N.R."/>
            <person name="Bi W."/>
            <person name="Bloom T."/>
            <person name="Borowsky M.L."/>
            <person name="Bugalter B.E."/>
            <person name="Butler J."/>
            <person name="Chang J.L."/>
            <person name="Chen C.-K."/>
            <person name="Cook A."/>
            <person name="Corum B."/>
            <person name="Cuomo C.A."/>
            <person name="de Jong P.J."/>
            <person name="DeCaprio D."/>
            <person name="Dewar K."/>
            <person name="FitzGerald M."/>
            <person name="Gilbert J."/>
            <person name="Gibson R."/>
            <person name="Gnerre S."/>
            <person name="Goldstein S."/>
            <person name="Grafham D.V."/>
            <person name="Grocock R."/>
            <person name="Hafez N."/>
            <person name="Hagopian D.S."/>
            <person name="Hart E."/>
            <person name="Norman C.H."/>
            <person name="Humphray S."/>
            <person name="Jaffe D.B."/>
            <person name="Jones M."/>
            <person name="Kamal M."/>
            <person name="Khodiyar V.K."/>
            <person name="LaButti K."/>
            <person name="Laird G."/>
            <person name="Lehoczky J."/>
            <person name="Liu X."/>
            <person name="Lokyitsang T."/>
            <person name="Loveland J."/>
            <person name="Lui A."/>
            <person name="Macdonald P."/>
            <person name="Major J.E."/>
            <person name="Matthews L."/>
            <person name="Mauceli E."/>
            <person name="McCarroll S.A."/>
            <person name="Mihalev A.H."/>
            <person name="Mudge J."/>
            <person name="Nguyen C."/>
            <person name="Nicol R."/>
            <person name="O'Leary S.B."/>
            <person name="Osoegawa K."/>
            <person name="Schwartz D.C."/>
            <person name="Shaw-Smith C."/>
            <person name="Stankiewicz P."/>
            <person name="Steward C."/>
            <person name="Swarbreck D."/>
            <person name="Venkataraman V."/>
            <person name="Whittaker C.A."/>
            <person name="Yang X."/>
            <person name="Zimmer A.R."/>
            <person name="Bradley A."/>
            <person name="Hubbard T."/>
            <person name="Birren B.W."/>
            <person name="Rogers J."/>
            <person name="Lander E.S."/>
            <person name="Nusbaum C."/>
        </authorList>
    </citation>
    <scope>NUCLEOTIDE SEQUENCE [LARGE SCALE GENOMIC DNA]</scope>
</reference>
<reference key="5">
    <citation type="journal article" date="2004" name="Genome Res.">
        <title>The status, quality, and expansion of the NIH full-length cDNA project: the Mammalian Gene Collection (MGC).</title>
        <authorList>
            <consortium name="The MGC Project Team"/>
        </authorList>
    </citation>
    <scope>NUCLEOTIDE SEQUENCE [LARGE SCALE MRNA] (ISOFORM 1)</scope>
    <source>
        <tissue>Lung</tissue>
    </source>
</reference>
<reference key="6">
    <citation type="journal article" date="2005" name="Mol. Pharmacol.">
        <title>Expression of deoxynucleotide carrier is not associated with the mitochondrial DNA depletion caused by anti-HIV dideoxynucleoside analogs and mitochondrial dNTP uptake.</title>
        <authorList>
            <person name="Lam W."/>
            <person name="Chen C."/>
            <person name="Ruan S."/>
            <person name="Leung C.H."/>
            <person name="Cheng Y.C."/>
        </authorList>
    </citation>
    <scope>SUBCELLULAR LOCATION</scope>
</reference>
<reference key="7">
    <citation type="journal article" date="2008" name="Mitochondrion">
        <title>The evidence that the DNC (SLC25A19) is not the mitochondrial deoxyribonucleotide carrier.</title>
        <authorList>
            <person name="Kang J."/>
            <person name="Samuels D.C."/>
        </authorList>
    </citation>
    <scope>FUNCTION</scope>
    <scope>TRANSPORTER ACTIVITY</scope>
</reference>
<reference key="8">
    <citation type="journal article" date="2011" name="BMC Syst. Biol.">
        <title>Initial characterization of the human central proteome.</title>
        <authorList>
            <person name="Burkard T.R."/>
            <person name="Planyavsky M."/>
            <person name="Kaupe I."/>
            <person name="Breitwieser F.P."/>
            <person name="Buerckstuemmer T."/>
            <person name="Bennett K.L."/>
            <person name="Superti-Furga G."/>
            <person name="Colinge J."/>
        </authorList>
    </citation>
    <scope>IDENTIFICATION BY MASS SPECTROMETRY [LARGE SCALE ANALYSIS]</scope>
</reference>
<reference key="9">
    <citation type="journal article" date="2013" name="J. Proteome Res.">
        <title>Toward a comprehensive characterization of a human cancer cell phosphoproteome.</title>
        <authorList>
            <person name="Zhou H."/>
            <person name="Di Palma S."/>
            <person name="Preisinger C."/>
            <person name="Peng M."/>
            <person name="Polat A.N."/>
            <person name="Heck A.J."/>
            <person name="Mohammed S."/>
        </authorList>
    </citation>
    <scope>PHOSPHORYLATION [LARGE SCALE ANALYSIS] AT SER-51</scope>
    <scope>IDENTIFICATION BY MASS SPECTROMETRY [LARGE SCALE ANALYSIS]</scope>
    <source>
        <tissue>Cervix carcinoma</tissue>
    </source>
</reference>
<reference key="10">
    <citation type="journal article" date="2015" name="Proteomics">
        <title>N-terminome analysis of the human mitochondrial proteome.</title>
        <authorList>
            <person name="Vaca Jacome A.S."/>
            <person name="Rabilloud T."/>
            <person name="Schaeffer-Reiss C."/>
            <person name="Rompais M."/>
            <person name="Ayoub D."/>
            <person name="Lane L."/>
            <person name="Bairoch A."/>
            <person name="Van Dorsselaer A."/>
            <person name="Carapito C."/>
        </authorList>
    </citation>
    <scope>IDENTIFICATION BY MASS SPECTROMETRY [LARGE SCALE ANALYSIS]</scope>
</reference>
<reference key="11">
    <citation type="journal article" date="2002" name="Nat. Genet.">
        <title>Mutant deoxynucleotide carrier is associated with congenital microcephaly.</title>
        <authorList>
            <person name="Rosenberg M.J."/>
            <person name="Agarwala R."/>
            <person name="Bouffard G."/>
            <person name="Davis J."/>
            <person name="Fiermonte G."/>
            <person name="Hilliard M.S."/>
            <person name="Koch T."/>
            <person name="Kalikin L.M."/>
            <person name="Makalowska I."/>
            <person name="Morton D.H."/>
            <person name="Petty E.M."/>
            <person name="Weber J.L."/>
            <person name="Palmieri F."/>
            <person name="Kelley R.I."/>
            <person name="Schaeffer A.A."/>
            <person name="Biesecker L.G."/>
        </authorList>
    </citation>
    <scope>VARIANT MCPHA ALA-177</scope>
</reference>
<reference key="12">
    <citation type="journal article" date="2006" name="Proc. Natl. Acad. Sci. U.S.A.">
        <title>Knockout of Slc25a19 causes mitochondrial thiamine pyrophosphate depletion, embryonic lethality, CNS malformations, and anemia.</title>
        <authorList>
            <person name="Lindhurst M.J."/>
            <person name="Fiermonte G."/>
            <person name="Song S."/>
            <person name="Struys E."/>
            <person name="De Leonardis F."/>
            <person name="Schwartzberg P.L."/>
            <person name="Chen A."/>
            <person name="Castegna A."/>
            <person name="Verhoeven N."/>
            <person name="Mathews C.K."/>
            <person name="Palmieri F."/>
            <person name="Biesecker L.G."/>
        </authorList>
    </citation>
    <scope>FUNCTION</scope>
    <scope>TRANSPORTER ACTIVITY</scope>
    <scope>CHARACTERIZATION OF VARIANT MCPHA ALA-177</scope>
</reference>
<reference key="13">
    <citation type="journal article" date="2009" name="Ann. Neurol.">
        <title>SLC25A19 mutation as a cause of neuropathy and bilateral striatal necrosis.</title>
        <authorList>
            <person name="Spiegel R."/>
            <person name="Shaag A."/>
            <person name="Edvardson S."/>
            <person name="Mandel H."/>
            <person name="Stepensky P."/>
            <person name="Shalev S.A."/>
            <person name="Horovitz Y."/>
            <person name="Pines O."/>
            <person name="Elpeleg O."/>
        </authorList>
    </citation>
    <scope>VARIANT THMD4 SER-125</scope>
    <scope>CHARACTERIZATION OF VARIANT THMD4 SER-125</scope>
</reference>
<reference key="14">
    <citation type="journal article" date="2016" name="Biochim. Biophys. Acta">
        <title>Structure-function characterization of the human mitochondrial thiamin pyrophosphate transporter (hMTPPT; SLC25A19): Important roles for Ile(33), Ser(34), Asp(37), His(137) and Lys(291).</title>
        <authorList>
            <person name="Sabui S."/>
            <person name="Subramanian V.S."/>
            <person name="Kapadia R."/>
            <person name="Said H.M."/>
        </authorList>
    </citation>
    <scope>FUNCTION</scope>
    <scope>TRANSPORTER ACTIVITY</scope>
    <scope>SUBCELLULAR LOCATION</scope>
    <scope>MUTAGENESIS OF THR-29; ARG-30; ILE-33; SER-34; ASP-37; HIS-82; HIS-137; LYS-231; LYS-291 AND PHE-298</scope>
</reference>
<reference key="15">
    <citation type="journal article" date="2019" name="J. Hum. Genet.">
        <title>Functional analysis of the third identified SLC25A19 mutation causative for the thiamine metabolism dysfunction syndrome 4.</title>
        <authorList>
            <person name="Bottega R."/>
            <person name="Perrone M.D."/>
            <person name="Vecchiato K."/>
            <person name="Taddio A."/>
            <person name="Sabui S."/>
            <person name="Pecile V."/>
            <person name="Said H.M."/>
            <person name="Faletra F."/>
        </authorList>
    </citation>
    <scope>VARIANT THMD4 HIS-192</scope>
    <scope>CHARACTERIZATION OF VARIANT THMD4 HIS-192</scope>
    <scope>SUBCELLULAR LOCATION</scope>
</reference>
<reference key="16">
    <citation type="journal article" date="2021" name="Orphanet J. Rare Dis.">
        <title>Identification and functional analysis of novel SLC25A19 variants causing thiamine metabolism dysfunction syndrome 4.</title>
        <authorList>
            <person name="Chen Y."/>
            <person name="Fang B."/>
            <person name="Hu X."/>
            <person name="Guo R."/>
            <person name="Guo J."/>
            <person name="Fang K."/>
            <person name="Ni J."/>
            <person name="Li W."/>
            <person name="Qian S."/>
            <person name="Hao C."/>
        </authorList>
    </citation>
    <scope>FUNCTION</scope>
    <scope>TRANSPORTER ACTIVITY</scope>
</reference>
<protein>
    <recommendedName>
        <fullName>Mitochondrial thiamine pyrophosphate carrier</fullName>
    </recommendedName>
    <alternativeName>
        <fullName evidence="14">Mitochondrial thiamine pyrophosphate transporter</fullName>
        <shortName evidence="14">MTPPT</shortName>
    </alternativeName>
    <alternativeName>
        <fullName>Mitochondrial uncoupling protein 1</fullName>
    </alternativeName>
    <alternativeName>
        <fullName>Solute carrier family 25 member 19</fullName>
    </alternativeName>
</protein>
<accession>Q9HC21</accession>
<accession>E9PF74</accession>
<accession>Q6V9R7</accession>
<evidence type="ECO:0000250" key="1"/>
<evidence type="ECO:0000255" key="2"/>
<evidence type="ECO:0000255" key="3">
    <source>
        <dbReference type="PROSITE-ProRule" id="PRU00282"/>
    </source>
</evidence>
<evidence type="ECO:0000269" key="4">
    <source>
    </source>
</evidence>
<evidence type="ECO:0000269" key="5">
    <source>
    </source>
</evidence>
<evidence type="ECO:0000269" key="6">
    <source>
    </source>
</evidence>
<evidence type="ECO:0000269" key="7">
    <source>
    </source>
</evidence>
<evidence type="ECO:0000269" key="8">
    <source>
    </source>
</evidence>
<evidence type="ECO:0000269" key="9">
    <source>
    </source>
</evidence>
<evidence type="ECO:0000269" key="10">
    <source>
    </source>
</evidence>
<evidence type="ECO:0000269" key="11">
    <source>
    </source>
</evidence>
<evidence type="ECO:0000269" key="12">
    <source>
    </source>
</evidence>
<evidence type="ECO:0000303" key="13">
    <source>
    </source>
</evidence>
<evidence type="ECO:0000303" key="14">
    <source>
    </source>
</evidence>
<evidence type="ECO:0000303" key="15">
    <source ref="2"/>
</evidence>
<evidence type="ECO:0000303" key="16">
    <source ref="3"/>
</evidence>
<evidence type="ECO:0000305" key="17"/>
<evidence type="ECO:0000312" key="18">
    <source>
        <dbReference type="HGNC" id="HGNC:14409"/>
    </source>
</evidence>
<evidence type="ECO:0007744" key="19">
    <source>
    </source>
</evidence>
<proteinExistence type="evidence at protein level"/>
<keyword id="KW-0025">Alternative splicing</keyword>
<keyword id="KW-0050">Antiport</keyword>
<keyword id="KW-0225">Disease variant</keyword>
<keyword id="KW-0472">Membrane</keyword>
<keyword id="KW-0496">Mitochondrion</keyword>
<keyword id="KW-0622">Neuropathy</keyword>
<keyword id="KW-0597">Phosphoprotein</keyword>
<keyword id="KW-1267">Proteomics identification</keyword>
<keyword id="KW-1185">Reference proteome</keyword>
<keyword id="KW-0677">Repeat</keyword>
<keyword id="KW-0812">Transmembrane</keyword>
<keyword id="KW-1133">Transmembrane helix</keyword>
<keyword id="KW-0813">Transport</keyword>
<organism>
    <name type="scientific">Homo sapiens</name>
    <name type="common">Human</name>
    <dbReference type="NCBI Taxonomy" id="9606"/>
    <lineage>
        <taxon>Eukaryota</taxon>
        <taxon>Metazoa</taxon>
        <taxon>Chordata</taxon>
        <taxon>Craniata</taxon>
        <taxon>Vertebrata</taxon>
        <taxon>Euteleostomi</taxon>
        <taxon>Mammalia</taxon>
        <taxon>Eutheria</taxon>
        <taxon>Euarchontoglires</taxon>
        <taxon>Primates</taxon>
        <taxon>Haplorrhini</taxon>
        <taxon>Catarrhini</taxon>
        <taxon>Hominidae</taxon>
        <taxon>Homo</taxon>
    </lineage>
</organism>
<sequence length="320" mass="35511">MVGYDPKPDGRNNTKFQVAVAGSVSGLVTRALISPFDVIKIRFQLQHERLSRSDPSAKYHGILQASRQILQEEGPTAFWKGHVPAQILSIGYGAVQFLSFEMLTELVHRGSVYDAREFSVHFVCGGLAACMATLTVHPVDVLRTRFAAQGEPKVYNTLRHAVGTMYRSEGPQVFYKGLAPTLIAIFPYAGLQFSCYSSLKHLYKWAIPAEGKKNENLQNLLCGSGAGVISKTLTYPLDLFKKRLQVGGFEHARAAFGQVRRYKGLMDCAKQVLQKEGALGFFKGLSPSLLKAALSTGFMFFSYEFFCNVFHCMNRTASQR</sequence>